<sequence length="122" mass="13770">MKLLTSLVFCSLLLGVCHGGFFSFVHEAFQGAGDMWRAYTDMKEANWKNSDKYFHARGNYDAAQRGPGGVWAAEKISDGREAFQEFFGRGHEDTIADQEANRHGRSGKDPNYYRPPGLPDKY</sequence>
<feature type="signal peptide" evidence="4">
    <location>
        <begin position="1"/>
        <end position="19"/>
    </location>
</feature>
<feature type="chain" id="PRO_0000031588" description="Serum amyloid A-1 protein">
    <location>
        <begin position="20"/>
        <end position="122"/>
    </location>
</feature>
<feature type="region of interest" description="Important for amyloid formation" evidence="1">
    <location>
        <begin position="20"/>
        <end position="45"/>
    </location>
</feature>
<feature type="region of interest" description="Disordered" evidence="2">
    <location>
        <begin position="91"/>
        <end position="122"/>
    </location>
</feature>
<feature type="compositionally biased region" description="Basic and acidic residues" evidence="2">
    <location>
        <begin position="91"/>
        <end position="108"/>
    </location>
</feature>
<proteinExistence type="evidence at protein level"/>
<evidence type="ECO:0000250" key="1"/>
<evidence type="ECO:0000256" key="2">
    <source>
        <dbReference type="SAM" id="MobiDB-lite"/>
    </source>
</evidence>
<evidence type="ECO:0000269" key="3">
    <source>
    </source>
</evidence>
<evidence type="ECO:0000269" key="4">
    <source>
    </source>
</evidence>
<evidence type="ECO:0000305" key="5"/>
<name>SAA1_MOUSE</name>
<gene>
    <name type="primary">Saa1</name>
</gene>
<reference key="1">
    <citation type="journal article" date="1986" name="J. Biol. Chem.">
        <title>Structure of the murine serum amyloid A gene family. Gene conversion.</title>
        <authorList>
            <person name="Lowell C.A."/>
            <person name="Potter D.A."/>
            <person name="Stearman R.S."/>
            <person name="Morrow J.F."/>
        </authorList>
    </citation>
    <scope>NUCLEOTIDE SEQUENCE [GENOMIC DNA]</scope>
</reference>
<reference key="2">
    <citation type="journal article" date="1985" name="Proc. Natl. Acad. Sci. U.S.A.">
        <title>Complete primary structures of two major murine serum amyloid A proteins deduced from cDNA sequences.</title>
        <authorList>
            <person name="Yamamoto K."/>
            <person name="Migita S."/>
        </authorList>
    </citation>
    <scope>NUCLEOTIDE SEQUENCE OF 9-122</scope>
    <scope>TISSUE SPECIFICITY</scope>
    <scope>INDUCTION BY LIPOPOLYSACCHARIDE</scope>
</reference>
<reference key="3">
    <citation type="journal article" date="1997" name="J. Chromatogr. B">
        <title>Isolation and purification of two major serum amyloid A isotypes SAA1 and SAA2 from the acute phase plasma of mice.</title>
        <authorList>
            <person name="Kaplan B."/>
            <person name="Yakar S."/>
            <person name="Balta Y."/>
            <person name="Pras M."/>
            <person name="Martin B."/>
        </authorList>
    </citation>
    <scope>PROTEIN SEQUENCE OF 20-39</scope>
    <scope>SUBCELLULAR LOCATION</scope>
    <scope>TISSUE SPECIFICITY</scope>
    <scope>FUNCTION</scope>
</reference>
<dbReference type="EMBL" id="M13521">
    <property type="protein sequence ID" value="AAA40084.1"/>
    <property type="molecule type" value="Genomic_DNA"/>
</dbReference>
<dbReference type="EMBL" id="M11131">
    <property type="protein sequence ID" value="AAA40083.1"/>
    <property type="molecule type" value="Genomic_RNA"/>
</dbReference>
<dbReference type="CCDS" id="CCDS21284.1"/>
<dbReference type="PIR" id="A23843">
    <property type="entry name" value="A23843"/>
</dbReference>
<dbReference type="RefSeq" id="NP_001344422.1">
    <property type="nucleotide sequence ID" value="NM_001357493.1"/>
</dbReference>
<dbReference type="RefSeq" id="NP_001390014.1">
    <property type="nucleotide sequence ID" value="NM_001403085.1"/>
</dbReference>
<dbReference type="RefSeq" id="NP_001390015.1">
    <property type="nucleotide sequence ID" value="NM_001403086.1"/>
</dbReference>
<dbReference type="RefSeq" id="NP_033143.1">
    <property type="nucleotide sequence ID" value="NM_009117.4"/>
</dbReference>
<dbReference type="RefSeq" id="XP_006540789.1">
    <property type="nucleotide sequence ID" value="XM_006540726.3"/>
</dbReference>
<dbReference type="SMR" id="P05366"/>
<dbReference type="FunCoup" id="P05366">
    <property type="interactions" value="16"/>
</dbReference>
<dbReference type="STRING" id="10090.ENSMUSP00000119150"/>
<dbReference type="iPTMnet" id="P05366"/>
<dbReference type="PhosphoSitePlus" id="P05366"/>
<dbReference type="CPTAC" id="non-CPTAC-3437"/>
<dbReference type="PaxDb" id="10090-ENSMUSP00000119150"/>
<dbReference type="PeptideAtlas" id="P05366"/>
<dbReference type="ProteomicsDB" id="260809"/>
<dbReference type="DNASU" id="20208"/>
<dbReference type="Ensembl" id="ENSMUST00000128088.4">
    <property type="protein sequence ID" value="ENSMUSP00000119150.2"/>
    <property type="gene ID" value="ENSMUSG00000074115.6"/>
</dbReference>
<dbReference type="GeneID" id="20208"/>
<dbReference type="KEGG" id="mmu:20208"/>
<dbReference type="UCSC" id="uc009gyz.1">
    <property type="organism name" value="mouse"/>
</dbReference>
<dbReference type="AGR" id="MGI:98221"/>
<dbReference type="CTD" id="6288"/>
<dbReference type="MGI" id="MGI:98221">
    <property type="gene designation" value="Saa1"/>
</dbReference>
<dbReference type="VEuPathDB" id="HostDB:ENSMUSG00000074115"/>
<dbReference type="eggNOG" id="ENOG502S4PB">
    <property type="taxonomic scope" value="Eukaryota"/>
</dbReference>
<dbReference type="GeneTree" id="ENSGT00390000004737"/>
<dbReference type="HOGENOM" id="CLU_129936_0_0_1"/>
<dbReference type="InParanoid" id="P05366"/>
<dbReference type="OMA" id="GHEDTIA"/>
<dbReference type="PhylomeDB" id="P05366"/>
<dbReference type="TreeFam" id="TF332544"/>
<dbReference type="BioGRID-ORCS" id="20208">
    <property type="hits" value="1 hit in 58 CRISPR screens"/>
</dbReference>
<dbReference type="ChiTaRS" id="Saa1">
    <property type="organism name" value="mouse"/>
</dbReference>
<dbReference type="PRO" id="PR:P05366"/>
<dbReference type="Proteomes" id="UP000000589">
    <property type="component" value="Chromosome 7"/>
</dbReference>
<dbReference type="RNAct" id="P05366">
    <property type="molecule type" value="protein"/>
</dbReference>
<dbReference type="Bgee" id="ENSMUSG00000074115">
    <property type="expression patterns" value="Expressed in left colon and 54 other cell types or tissues"/>
</dbReference>
<dbReference type="ExpressionAtlas" id="P05366">
    <property type="expression patterns" value="baseline and differential"/>
</dbReference>
<dbReference type="GO" id="GO:0005615">
    <property type="term" value="C:extracellular space"/>
    <property type="evidence" value="ECO:0000314"/>
    <property type="project" value="MGI"/>
</dbReference>
<dbReference type="GO" id="GO:0034364">
    <property type="term" value="C:high-density lipoprotein particle"/>
    <property type="evidence" value="ECO:0007669"/>
    <property type="project" value="UniProtKB-KW"/>
</dbReference>
<dbReference type="GO" id="GO:0008201">
    <property type="term" value="F:heparin binding"/>
    <property type="evidence" value="ECO:0007669"/>
    <property type="project" value="UniProtKB-KW"/>
</dbReference>
<dbReference type="GO" id="GO:0006953">
    <property type="term" value="P:acute-phase response"/>
    <property type="evidence" value="ECO:0007669"/>
    <property type="project" value="UniProtKB-KW"/>
</dbReference>
<dbReference type="GO" id="GO:0008203">
    <property type="term" value="P:cholesterol metabolic process"/>
    <property type="evidence" value="ECO:0000314"/>
    <property type="project" value="MGI"/>
</dbReference>
<dbReference type="GO" id="GO:0009617">
    <property type="term" value="P:response to bacterium"/>
    <property type="evidence" value="ECO:0000270"/>
    <property type="project" value="MGI"/>
</dbReference>
<dbReference type="FunFam" id="1.10.132.110:FF:000001">
    <property type="entry name" value="Serum amyloid A protein"/>
    <property type="match status" value="1"/>
</dbReference>
<dbReference type="Gene3D" id="1.10.132.110">
    <property type="entry name" value="Serum amyloid A protein"/>
    <property type="match status" value="1"/>
</dbReference>
<dbReference type="InterPro" id="IPR000096">
    <property type="entry name" value="Serum_amyloid_A"/>
</dbReference>
<dbReference type="InterPro" id="IPR052464">
    <property type="entry name" value="Synovial_Prolif_Regulator"/>
</dbReference>
<dbReference type="PANTHER" id="PTHR23424">
    <property type="entry name" value="SERUM AMYLOID A"/>
    <property type="match status" value="1"/>
</dbReference>
<dbReference type="PANTHER" id="PTHR23424:SF29">
    <property type="entry name" value="SERUM AMYLOID A PROTEIN"/>
    <property type="match status" value="1"/>
</dbReference>
<dbReference type="Pfam" id="PF00277">
    <property type="entry name" value="SAA"/>
    <property type="match status" value="1"/>
</dbReference>
<dbReference type="PIRSF" id="PIRSF002472">
    <property type="entry name" value="Serum_amyloid_A"/>
    <property type="match status" value="1"/>
</dbReference>
<dbReference type="PRINTS" id="PR00306">
    <property type="entry name" value="SERUMAMYLOID"/>
</dbReference>
<dbReference type="SMART" id="SM00197">
    <property type="entry name" value="SAA"/>
    <property type="match status" value="1"/>
</dbReference>
<dbReference type="PROSITE" id="PS00992">
    <property type="entry name" value="SAA"/>
    <property type="match status" value="1"/>
</dbReference>
<comment type="function">
    <text evidence="4">Major acute phase protein.</text>
</comment>
<comment type="subunit">
    <text evidence="1">Homohexamer; dimer of trimers. Can form amyloid fibrils after partial proteolysis; the native, undenatured protein does not form amyloid fibrils (in vitro). Apolipoprotein of the HDL complex. Binds to heparin (By similarity).</text>
</comment>
<comment type="subcellular location">
    <subcellularLocation>
        <location evidence="4">Secreted</location>
    </subcellularLocation>
</comment>
<comment type="tissue specificity">
    <text evidence="3 4">Detected in blood plasma (at protein level). Detected in liver.</text>
</comment>
<comment type="induction">
    <text evidence="3">By bacterial lipopolysaccharide.</text>
</comment>
<comment type="similarity">
    <text evidence="5">Belongs to the SAA family.</text>
</comment>
<accession>P05366</accession>
<keyword id="KW-0011">Acute phase</keyword>
<keyword id="KW-0903">Direct protein sequencing</keyword>
<keyword id="KW-0345">HDL</keyword>
<keyword id="KW-0358">Heparin-binding</keyword>
<keyword id="KW-1185">Reference proteome</keyword>
<keyword id="KW-0964">Secreted</keyword>
<keyword id="KW-0732">Signal</keyword>
<protein>
    <recommendedName>
        <fullName>Serum amyloid A-1 protein</fullName>
    </recommendedName>
</protein>
<organism>
    <name type="scientific">Mus musculus</name>
    <name type="common">Mouse</name>
    <dbReference type="NCBI Taxonomy" id="10090"/>
    <lineage>
        <taxon>Eukaryota</taxon>
        <taxon>Metazoa</taxon>
        <taxon>Chordata</taxon>
        <taxon>Craniata</taxon>
        <taxon>Vertebrata</taxon>
        <taxon>Euteleostomi</taxon>
        <taxon>Mammalia</taxon>
        <taxon>Eutheria</taxon>
        <taxon>Euarchontoglires</taxon>
        <taxon>Glires</taxon>
        <taxon>Rodentia</taxon>
        <taxon>Myomorpha</taxon>
        <taxon>Muroidea</taxon>
        <taxon>Muridae</taxon>
        <taxon>Murinae</taxon>
        <taxon>Mus</taxon>
        <taxon>Mus</taxon>
    </lineage>
</organism>